<protein>
    <recommendedName>
        <fullName evidence="1">ATP synthase subunit alpha</fullName>
        <ecNumber evidence="1">7.1.2.2</ecNumber>
    </recommendedName>
    <alternativeName>
        <fullName evidence="1">ATP synthase F1 sector subunit alpha</fullName>
    </alternativeName>
    <alternativeName>
        <fullName evidence="1">F-ATPase subunit alpha</fullName>
    </alternativeName>
</protein>
<accession>B7UMJ9</accession>
<dbReference type="EC" id="7.1.2.2" evidence="1"/>
<dbReference type="EMBL" id="FM180568">
    <property type="protein sequence ID" value="CAS11592.1"/>
    <property type="molecule type" value="Genomic_DNA"/>
</dbReference>
<dbReference type="RefSeq" id="WP_001176745.1">
    <property type="nucleotide sequence ID" value="NC_011601.1"/>
</dbReference>
<dbReference type="SMR" id="B7UMJ9"/>
<dbReference type="GeneID" id="93778233"/>
<dbReference type="KEGG" id="ecg:E2348C_4044"/>
<dbReference type="HOGENOM" id="CLU_010091_2_1_6"/>
<dbReference type="Proteomes" id="UP000008205">
    <property type="component" value="Chromosome"/>
</dbReference>
<dbReference type="GO" id="GO:0005886">
    <property type="term" value="C:plasma membrane"/>
    <property type="evidence" value="ECO:0007669"/>
    <property type="project" value="UniProtKB-SubCell"/>
</dbReference>
<dbReference type="GO" id="GO:0045259">
    <property type="term" value="C:proton-transporting ATP synthase complex"/>
    <property type="evidence" value="ECO:0007669"/>
    <property type="project" value="UniProtKB-KW"/>
</dbReference>
<dbReference type="GO" id="GO:0043531">
    <property type="term" value="F:ADP binding"/>
    <property type="evidence" value="ECO:0007669"/>
    <property type="project" value="TreeGrafter"/>
</dbReference>
<dbReference type="GO" id="GO:0005524">
    <property type="term" value="F:ATP binding"/>
    <property type="evidence" value="ECO:0007669"/>
    <property type="project" value="UniProtKB-UniRule"/>
</dbReference>
<dbReference type="GO" id="GO:0046933">
    <property type="term" value="F:proton-transporting ATP synthase activity, rotational mechanism"/>
    <property type="evidence" value="ECO:0007669"/>
    <property type="project" value="UniProtKB-UniRule"/>
</dbReference>
<dbReference type="CDD" id="cd18113">
    <property type="entry name" value="ATP-synt_F1_alpha_C"/>
    <property type="match status" value="1"/>
</dbReference>
<dbReference type="CDD" id="cd18116">
    <property type="entry name" value="ATP-synt_F1_alpha_N"/>
    <property type="match status" value="1"/>
</dbReference>
<dbReference type="CDD" id="cd01132">
    <property type="entry name" value="F1-ATPase_alpha_CD"/>
    <property type="match status" value="1"/>
</dbReference>
<dbReference type="FunFam" id="1.20.150.20:FF:000001">
    <property type="entry name" value="ATP synthase subunit alpha"/>
    <property type="match status" value="1"/>
</dbReference>
<dbReference type="FunFam" id="2.40.30.20:FF:000001">
    <property type="entry name" value="ATP synthase subunit alpha"/>
    <property type="match status" value="1"/>
</dbReference>
<dbReference type="FunFam" id="3.40.50.300:FF:000002">
    <property type="entry name" value="ATP synthase subunit alpha"/>
    <property type="match status" value="1"/>
</dbReference>
<dbReference type="Gene3D" id="2.40.30.20">
    <property type="match status" value="1"/>
</dbReference>
<dbReference type="Gene3D" id="1.20.150.20">
    <property type="entry name" value="ATP synthase alpha/beta chain, C-terminal domain"/>
    <property type="match status" value="1"/>
</dbReference>
<dbReference type="Gene3D" id="3.40.50.300">
    <property type="entry name" value="P-loop containing nucleotide triphosphate hydrolases"/>
    <property type="match status" value="1"/>
</dbReference>
<dbReference type="HAMAP" id="MF_01346">
    <property type="entry name" value="ATP_synth_alpha_bact"/>
    <property type="match status" value="1"/>
</dbReference>
<dbReference type="InterPro" id="IPR023366">
    <property type="entry name" value="ATP_synth_asu-like_sf"/>
</dbReference>
<dbReference type="InterPro" id="IPR000793">
    <property type="entry name" value="ATP_synth_asu_C"/>
</dbReference>
<dbReference type="InterPro" id="IPR038376">
    <property type="entry name" value="ATP_synth_asu_C_sf"/>
</dbReference>
<dbReference type="InterPro" id="IPR033732">
    <property type="entry name" value="ATP_synth_F1_a_nt-bd_dom"/>
</dbReference>
<dbReference type="InterPro" id="IPR005294">
    <property type="entry name" value="ATP_synth_F1_asu"/>
</dbReference>
<dbReference type="InterPro" id="IPR020003">
    <property type="entry name" value="ATPase_a/bsu_AS"/>
</dbReference>
<dbReference type="InterPro" id="IPR004100">
    <property type="entry name" value="ATPase_F1/V1/A1_a/bsu_N"/>
</dbReference>
<dbReference type="InterPro" id="IPR036121">
    <property type="entry name" value="ATPase_F1/V1/A1_a/bsu_N_sf"/>
</dbReference>
<dbReference type="InterPro" id="IPR000194">
    <property type="entry name" value="ATPase_F1/V1/A1_a/bsu_nucl-bd"/>
</dbReference>
<dbReference type="InterPro" id="IPR027417">
    <property type="entry name" value="P-loop_NTPase"/>
</dbReference>
<dbReference type="NCBIfam" id="TIGR00962">
    <property type="entry name" value="atpA"/>
    <property type="match status" value="1"/>
</dbReference>
<dbReference type="NCBIfam" id="NF009884">
    <property type="entry name" value="PRK13343.1"/>
    <property type="match status" value="1"/>
</dbReference>
<dbReference type="PANTHER" id="PTHR48082">
    <property type="entry name" value="ATP SYNTHASE SUBUNIT ALPHA, MITOCHONDRIAL"/>
    <property type="match status" value="1"/>
</dbReference>
<dbReference type="PANTHER" id="PTHR48082:SF2">
    <property type="entry name" value="ATP SYNTHASE SUBUNIT ALPHA, MITOCHONDRIAL"/>
    <property type="match status" value="1"/>
</dbReference>
<dbReference type="Pfam" id="PF00006">
    <property type="entry name" value="ATP-synt_ab"/>
    <property type="match status" value="1"/>
</dbReference>
<dbReference type="Pfam" id="PF00306">
    <property type="entry name" value="ATP-synt_ab_C"/>
    <property type="match status" value="1"/>
</dbReference>
<dbReference type="Pfam" id="PF02874">
    <property type="entry name" value="ATP-synt_ab_N"/>
    <property type="match status" value="1"/>
</dbReference>
<dbReference type="SUPFAM" id="SSF47917">
    <property type="entry name" value="C-terminal domain of alpha and beta subunits of F1 ATP synthase"/>
    <property type="match status" value="1"/>
</dbReference>
<dbReference type="SUPFAM" id="SSF50615">
    <property type="entry name" value="N-terminal domain of alpha and beta subunits of F1 ATP synthase"/>
    <property type="match status" value="1"/>
</dbReference>
<dbReference type="SUPFAM" id="SSF52540">
    <property type="entry name" value="P-loop containing nucleoside triphosphate hydrolases"/>
    <property type="match status" value="1"/>
</dbReference>
<dbReference type="PROSITE" id="PS00152">
    <property type="entry name" value="ATPASE_ALPHA_BETA"/>
    <property type="match status" value="1"/>
</dbReference>
<comment type="function">
    <text evidence="1">Produces ATP from ADP in the presence of a proton gradient across the membrane. The alpha chain is a regulatory subunit.</text>
</comment>
<comment type="catalytic activity">
    <reaction evidence="1">
        <text>ATP + H2O + 4 H(+)(in) = ADP + phosphate + 5 H(+)(out)</text>
        <dbReference type="Rhea" id="RHEA:57720"/>
        <dbReference type="ChEBI" id="CHEBI:15377"/>
        <dbReference type="ChEBI" id="CHEBI:15378"/>
        <dbReference type="ChEBI" id="CHEBI:30616"/>
        <dbReference type="ChEBI" id="CHEBI:43474"/>
        <dbReference type="ChEBI" id="CHEBI:456216"/>
        <dbReference type="EC" id="7.1.2.2"/>
    </reaction>
</comment>
<comment type="subunit">
    <text evidence="1">F-type ATPases have 2 components, CF(1) - the catalytic core - and CF(0) - the membrane proton channel. CF(1) has five subunits: alpha(3), beta(3), gamma(1), delta(1), epsilon(1). CF(0) has three main subunits: a(1), b(2) and c(9-12). The alpha and beta chains form an alternating ring which encloses part of the gamma chain. CF(1) is attached to CF(0) by a central stalk formed by the gamma and epsilon chains, while a peripheral stalk is formed by the delta and b chains.</text>
</comment>
<comment type="subcellular location">
    <subcellularLocation>
        <location evidence="1">Cell inner membrane</location>
        <topology evidence="1">Peripheral membrane protein</topology>
    </subcellularLocation>
</comment>
<comment type="similarity">
    <text evidence="1">Belongs to the ATPase alpha/beta chains family.</text>
</comment>
<reference key="1">
    <citation type="journal article" date="2009" name="J. Bacteriol.">
        <title>Complete genome sequence and comparative genome analysis of enteropathogenic Escherichia coli O127:H6 strain E2348/69.</title>
        <authorList>
            <person name="Iguchi A."/>
            <person name="Thomson N.R."/>
            <person name="Ogura Y."/>
            <person name="Saunders D."/>
            <person name="Ooka T."/>
            <person name="Henderson I.R."/>
            <person name="Harris D."/>
            <person name="Asadulghani M."/>
            <person name="Kurokawa K."/>
            <person name="Dean P."/>
            <person name="Kenny B."/>
            <person name="Quail M.A."/>
            <person name="Thurston S."/>
            <person name="Dougan G."/>
            <person name="Hayashi T."/>
            <person name="Parkhill J."/>
            <person name="Frankel G."/>
        </authorList>
    </citation>
    <scope>NUCLEOTIDE SEQUENCE [LARGE SCALE GENOMIC DNA]</scope>
    <source>
        <strain>E2348/69 / EPEC</strain>
    </source>
</reference>
<name>ATPA_ECO27</name>
<sequence length="513" mass="55222">MQLNSTEISELIKQRIAQFNVVSEAHNEGTIVSVSDGVIRIHGLADCMQGEMISLPGNRYAIALNLERDSVGAVVMGPYADLAEGMKVKCTGRILEVPVGRGLLGRVVNTLGAPIDGKGPLDHDGFSAVEAIAPGVIERQSVDQPVQTGYKAVDSMIPIGRGQRELIIGDRQTGKTALAIDAIINQRDSGIKCIYVAIGQKASTISNVVRKLEEHGALANTIVVVATASESAALQYLAPYAGCAMGEYFRDRGEDALIIYDDLSKQAVAYRQISLLLRRPPGREAFPGDVFYLHSRLLERAARVNAEYVEAFTKGEVKGKTGSLTALPIIETQAGDVSAFVPTNVISITDGQIFLETNLFNAGIRPAVNPGISVSRVGGAAQTKIMKKLSGGIRTALAQYRELAAFSQFASDLDDATRKQLDHGQKVTELLKQKQYAPMSVAQQSLVLFAAERGYLADVELSKIGSFEAALLAYVDRDHAPLMQEINQTGGYNDEIEGKLKGILDSFKATQSW</sequence>
<keyword id="KW-0066">ATP synthesis</keyword>
<keyword id="KW-0067">ATP-binding</keyword>
<keyword id="KW-0997">Cell inner membrane</keyword>
<keyword id="KW-1003">Cell membrane</keyword>
<keyword id="KW-0139">CF(1)</keyword>
<keyword id="KW-0375">Hydrogen ion transport</keyword>
<keyword id="KW-0406">Ion transport</keyword>
<keyword id="KW-0472">Membrane</keyword>
<keyword id="KW-0547">Nucleotide-binding</keyword>
<keyword id="KW-1185">Reference proteome</keyword>
<keyword id="KW-1278">Translocase</keyword>
<keyword id="KW-0813">Transport</keyword>
<organism>
    <name type="scientific">Escherichia coli O127:H6 (strain E2348/69 / EPEC)</name>
    <dbReference type="NCBI Taxonomy" id="574521"/>
    <lineage>
        <taxon>Bacteria</taxon>
        <taxon>Pseudomonadati</taxon>
        <taxon>Pseudomonadota</taxon>
        <taxon>Gammaproteobacteria</taxon>
        <taxon>Enterobacterales</taxon>
        <taxon>Enterobacteriaceae</taxon>
        <taxon>Escherichia</taxon>
    </lineage>
</organism>
<evidence type="ECO:0000255" key="1">
    <source>
        <dbReference type="HAMAP-Rule" id="MF_01346"/>
    </source>
</evidence>
<feature type="chain" id="PRO_1000166537" description="ATP synthase subunit alpha">
    <location>
        <begin position="1"/>
        <end position="513"/>
    </location>
</feature>
<feature type="binding site" evidence="1">
    <location>
        <begin position="169"/>
        <end position="176"/>
    </location>
    <ligand>
        <name>ATP</name>
        <dbReference type="ChEBI" id="CHEBI:30616"/>
    </ligand>
</feature>
<feature type="site" description="Required for activity" evidence="1">
    <location>
        <position position="373"/>
    </location>
</feature>
<gene>
    <name evidence="1" type="primary">atpA</name>
    <name type="ordered locus">E2348C_4044</name>
</gene>
<proteinExistence type="inferred from homology"/>